<proteinExistence type="inferred from homology"/>
<name>AOCD_METKA</name>
<comment type="function">
    <text evidence="1">Catalyzes the conversion of ornithine to proline, with the release of ammonia.</text>
</comment>
<comment type="catalytic activity">
    <reaction evidence="1">
        <text>L-ornithine = L-proline + NH4(+)</text>
        <dbReference type="Rhea" id="RHEA:24368"/>
        <dbReference type="ChEBI" id="CHEBI:28938"/>
        <dbReference type="ChEBI" id="CHEBI:46911"/>
        <dbReference type="ChEBI" id="CHEBI:60039"/>
        <dbReference type="EC" id="4.3.1.12"/>
    </reaction>
</comment>
<comment type="cofactor">
    <cofactor evidence="2">
        <name>NAD(+)</name>
        <dbReference type="ChEBI" id="CHEBI:57540"/>
    </cofactor>
</comment>
<comment type="similarity">
    <text evidence="3">Belongs to the AgrE/ArgZ ornithine cyclodeaminase family.</text>
</comment>
<accession>Q8TX14</accession>
<keyword id="KW-0456">Lyase</keyword>
<keyword id="KW-0520">NAD</keyword>
<keyword id="KW-0547">Nucleotide-binding</keyword>
<keyword id="KW-1185">Reference proteome</keyword>
<protein>
    <recommendedName>
        <fullName evidence="1">Ornithine cyclodeaminase</fullName>
        <shortName evidence="1">OCD</shortName>
        <ecNumber evidence="1">4.3.1.12</ecNumber>
    </recommendedName>
    <alternativeName>
        <fullName evidence="1">Archaeal ornithine cyclodeaminase</fullName>
    </alternativeName>
</protein>
<sequence>MTDREEVVELRGHIIDSLIFSRVLDTIMEMGGDFEILEFKVGKRKTDPSFAKILVKGKDPEHLREIVSELRKYGAVPVHTQEVRLEPAPADGVCPRGFYTTTNHRTFVLFDGEWIEVEDIEMDCAIVVYPEERRAVAKPIREVREGELVVVGDRGVRVKPPERPRGRTGIFGFMESEVSPEKPTPTLIRRIAEELEWHRKNGKIVVVVGPAVIHAGARDDLAWMIREGYVDVLFAGNAVATHDVEASLFGTSLGVDLETGEPVKGGHSHHLYAINEIRRVGGLREAVEKGILKDGIMYECIVNDVPYVLAGSIRDDGPIPDVITDVMEAQAEMRRHLKGATLVLMMATMLHSIATGNLLPSWVKTICVDINPAVVTKLMDRGTAQALGIVSDVGVFLPELVKELKRVRDDEA</sequence>
<reference key="1">
    <citation type="journal article" date="2002" name="Proc. Natl. Acad. Sci. U.S.A.">
        <title>The complete genome of hyperthermophile Methanopyrus kandleri AV19 and monophyly of archaeal methanogens.</title>
        <authorList>
            <person name="Slesarev A.I."/>
            <person name="Mezhevaya K.V."/>
            <person name="Makarova K.S."/>
            <person name="Polushin N.N."/>
            <person name="Shcherbinina O.V."/>
            <person name="Shakhova V.V."/>
            <person name="Belova G.I."/>
            <person name="Aravind L."/>
            <person name="Natale D.A."/>
            <person name="Rogozin I.B."/>
            <person name="Tatusov R.L."/>
            <person name="Wolf Y.I."/>
            <person name="Stetter K.O."/>
            <person name="Malykh A.G."/>
            <person name="Koonin E.V."/>
            <person name="Kozyavkin S.A."/>
        </authorList>
    </citation>
    <scope>NUCLEOTIDE SEQUENCE [LARGE SCALE GENOMIC DNA]</scope>
    <source>
        <strain>AV19 / DSM 6324 / JCM 9639 / NBRC 100938</strain>
    </source>
</reference>
<gene>
    <name type="ordered locus">MK0866</name>
</gene>
<feature type="chain" id="PRO_0000107366" description="Ornithine cyclodeaminase">
    <location>
        <begin position="1"/>
        <end position="412"/>
    </location>
</feature>
<feature type="binding site" evidence="2">
    <location>
        <position position="237"/>
    </location>
    <ligand>
        <name>NAD(+)</name>
        <dbReference type="ChEBI" id="CHEBI:57540"/>
    </ligand>
</feature>
<feature type="binding site" evidence="2">
    <location>
        <position position="238"/>
    </location>
    <ligand>
        <name>NAD(+)</name>
        <dbReference type="ChEBI" id="CHEBI:57540"/>
    </ligand>
</feature>
<feature type="binding site" evidence="2">
    <location>
        <position position="316"/>
    </location>
    <ligand>
        <name>NAD(+)</name>
        <dbReference type="ChEBI" id="CHEBI:57540"/>
    </ligand>
</feature>
<feature type="binding site" evidence="2">
    <location>
        <position position="348"/>
    </location>
    <ligand>
        <name>NAD(+)</name>
        <dbReference type="ChEBI" id="CHEBI:57540"/>
    </ligand>
</feature>
<feature type="binding site" evidence="2">
    <location>
        <position position="349"/>
    </location>
    <ligand>
        <name>NAD(+)</name>
        <dbReference type="ChEBI" id="CHEBI:57540"/>
    </ligand>
</feature>
<feature type="binding site" evidence="2">
    <location>
        <position position="350"/>
    </location>
    <ligand>
        <name>NAD(+)</name>
        <dbReference type="ChEBI" id="CHEBI:57540"/>
    </ligand>
</feature>
<feature type="binding site" evidence="2">
    <location>
        <position position="351"/>
    </location>
    <ligand>
        <name>NAD(+)</name>
        <dbReference type="ChEBI" id="CHEBI:57540"/>
    </ligand>
</feature>
<feature type="binding site" evidence="2">
    <location>
        <position position="369"/>
    </location>
    <ligand>
        <name>NAD(+)</name>
        <dbReference type="ChEBI" id="CHEBI:57540"/>
    </ligand>
</feature>
<feature type="binding site" evidence="2">
    <location>
        <position position="392"/>
    </location>
    <ligand>
        <name>NAD(+)</name>
        <dbReference type="ChEBI" id="CHEBI:57540"/>
    </ligand>
</feature>
<feature type="binding site" evidence="2">
    <location>
        <position position="393"/>
    </location>
    <ligand>
        <name>NAD(+)</name>
        <dbReference type="ChEBI" id="CHEBI:57540"/>
    </ligand>
</feature>
<organism>
    <name type="scientific">Methanopyrus kandleri (strain AV19 / DSM 6324 / JCM 9639 / NBRC 100938)</name>
    <dbReference type="NCBI Taxonomy" id="190192"/>
    <lineage>
        <taxon>Archaea</taxon>
        <taxon>Methanobacteriati</taxon>
        <taxon>Methanobacteriota</taxon>
        <taxon>Methanomada group</taxon>
        <taxon>Methanopyri</taxon>
        <taxon>Methanopyrales</taxon>
        <taxon>Methanopyraceae</taxon>
        <taxon>Methanopyrus</taxon>
    </lineage>
</organism>
<dbReference type="EC" id="4.3.1.12" evidence="1"/>
<dbReference type="EMBL" id="AE009439">
    <property type="protein sequence ID" value="AAM02079.1"/>
    <property type="molecule type" value="Genomic_DNA"/>
</dbReference>
<dbReference type="RefSeq" id="WP_011019234.1">
    <property type="nucleotide sequence ID" value="NC_003551.1"/>
</dbReference>
<dbReference type="SMR" id="Q8TX14"/>
<dbReference type="STRING" id="190192.MK0866"/>
<dbReference type="PaxDb" id="190192-MK0866"/>
<dbReference type="EnsemblBacteria" id="AAM02079">
    <property type="protein sequence ID" value="AAM02079"/>
    <property type="gene ID" value="MK0866"/>
</dbReference>
<dbReference type="GeneID" id="1476967"/>
<dbReference type="KEGG" id="mka:MK0866"/>
<dbReference type="PATRIC" id="fig|190192.8.peg.908"/>
<dbReference type="HOGENOM" id="CLU_056125_0_0_2"/>
<dbReference type="InParanoid" id="Q8TX14"/>
<dbReference type="OrthoDB" id="64170at2157"/>
<dbReference type="Proteomes" id="UP000001826">
    <property type="component" value="Chromosome"/>
</dbReference>
<dbReference type="CDD" id="cd12144">
    <property type="entry name" value="SDH_N_domain"/>
    <property type="match status" value="1"/>
</dbReference>
<dbReference type="Gene3D" id="2.40.420.10">
    <property type="entry name" value="conserved putative lor/sdh protein from methanococcus maripaludis s2 domain"/>
    <property type="match status" value="1"/>
</dbReference>
<dbReference type="Gene3D" id="3.40.50.10690">
    <property type="entry name" value="putative lor/sdh protein like domains"/>
    <property type="match status" value="1"/>
</dbReference>
<dbReference type="InterPro" id="IPR005239">
    <property type="entry name" value="ArgZ/ArgE-like"/>
</dbReference>
<dbReference type="InterPro" id="IPR048964">
    <property type="entry name" value="ArgZ/ArgE-like_C_1st"/>
</dbReference>
<dbReference type="InterPro" id="IPR048963">
    <property type="entry name" value="ArgZ/ArgE-like_C_2nd"/>
</dbReference>
<dbReference type="InterPro" id="IPR029035">
    <property type="entry name" value="DHS-like_NAD/FAD-binding_dom"/>
</dbReference>
<dbReference type="InterPro" id="IPR007545">
    <property type="entry name" value="LOR/SDH_bifunc_enz_cons_dom"/>
</dbReference>
<dbReference type="NCBIfam" id="TIGR00300">
    <property type="entry name" value="TIGR00300 family protein"/>
    <property type="match status" value="1"/>
</dbReference>
<dbReference type="Pfam" id="PF21571">
    <property type="entry name" value="ArgZ-like_C_1st"/>
    <property type="match status" value="1"/>
</dbReference>
<dbReference type="Pfam" id="PF21570">
    <property type="entry name" value="ArgZ-like_C_2nd"/>
    <property type="match status" value="1"/>
</dbReference>
<dbReference type="Pfam" id="PF04455">
    <property type="entry name" value="Saccharop_dh_N"/>
    <property type="match status" value="1"/>
</dbReference>
<dbReference type="SUPFAM" id="SSF52467">
    <property type="entry name" value="DHS-like NAD/FAD-binding domain"/>
    <property type="match status" value="1"/>
</dbReference>
<evidence type="ECO:0000250" key="1">
    <source>
        <dbReference type="UniProtKB" id="Q6LXX7"/>
    </source>
</evidence>
<evidence type="ECO:0000250" key="2">
    <source>
        <dbReference type="UniProtKB" id="Q8YMD9"/>
    </source>
</evidence>
<evidence type="ECO:0000305" key="3"/>